<feature type="chain" id="PRO_0000424029" description="Melanocortin-2 receptor accessory protein 2B">
    <location>
        <begin position="1"/>
        <end position="199"/>
    </location>
</feature>
<feature type="transmembrane region" description="Helical" evidence="2">
    <location>
        <begin position="39"/>
        <end position="59"/>
    </location>
</feature>
<feature type="glycosylation site" description="N-linked (GlcNAc...) asparagine" evidence="2">
    <location>
        <position position="6"/>
    </location>
</feature>
<keyword id="KW-1003">Cell membrane</keyword>
<keyword id="KW-0256">Endoplasmic reticulum</keyword>
<keyword id="KW-0325">Glycoprotein</keyword>
<keyword id="KW-0472">Membrane</keyword>
<keyword id="KW-1185">Reference proteome</keyword>
<keyword id="KW-0812">Transmembrane</keyword>
<keyword id="KW-1133">Transmembrane helix</keyword>
<organism>
    <name type="scientific">Danio rerio</name>
    <name type="common">Zebrafish</name>
    <name type="synonym">Brachydanio rerio</name>
    <dbReference type="NCBI Taxonomy" id="7955"/>
    <lineage>
        <taxon>Eukaryota</taxon>
        <taxon>Metazoa</taxon>
        <taxon>Chordata</taxon>
        <taxon>Craniata</taxon>
        <taxon>Vertebrata</taxon>
        <taxon>Euteleostomi</taxon>
        <taxon>Actinopterygii</taxon>
        <taxon>Neopterygii</taxon>
        <taxon>Teleostei</taxon>
        <taxon>Ostariophysi</taxon>
        <taxon>Cypriniformes</taxon>
        <taxon>Danionidae</taxon>
        <taxon>Danioninae</taxon>
        <taxon>Danio</taxon>
    </lineage>
</organism>
<gene>
    <name type="primary">mrap2b</name>
</gene>
<protein>
    <recommendedName>
        <fullName>Melanocortin-2 receptor accessory protein 2B</fullName>
        <shortName>zMRAP2b</shortName>
    </recommendedName>
</protein>
<proteinExistence type="evidence at protein level"/>
<reference key="1">
    <citation type="journal article" date="2013" name="Nature">
        <title>The zebrafish reference genome sequence and its relationship to the human genome.</title>
        <authorList>
            <person name="Howe K."/>
            <person name="Clark M.D."/>
            <person name="Torroja C.F."/>
            <person name="Torrance J."/>
            <person name="Berthelot C."/>
            <person name="Muffato M."/>
            <person name="Collins J.E."/>
            <person name="Humphray S."/>
            <person name="McLaren K."/>
            <person name="Matthews L."/>
            <person name="McLaren S."/>
            <person name="Sealy I."/>
            <person name="Caccamo M."/>
            <person name="Churcher C."/>
            <person name="Scott C."/>
            <person name="Barrett J.C."/>
            <person name="Koch R."/>
            <person name="Rauch G.J."/>
            <person name="White S."/>
            <person name="Chow W."/>
            <person name="Kilian B."/>
            <person name="Quintais L.T."/>
            <person name="Guerra-Assuncao J.A."/>
            <person name="Zhou Y."/>
            <person name="Gu Y."/>
            <person name="Yen J."/>
            <person name="Vogel J.H."/>
            <person name="Eyre T."/>
            <person name="Redmond S."/>
            <person name="Banerjee R."/>
            <person name="Chi J."/>
            <person name="Fu B."/>
            <person name="Langley E."/>
            <person name="Maguire S.F."/>
            <person name="Laird G.K."/>
            <person name="Lloyd D."/>
            <person name="Kenyon E."/>
            <person name="Donaldson S."/>
            <person name="Sehra H."/>
            <person name="Almeida-King J."/>
            <person name="Loveland J."/>
            <person name="Trevanion S."/>
            <person name="Jones M."/>
            <person name="Quail M."/>
            <person name="Willey D."/>
            <person name="Hunt A."/>
            <person name="Burton J."/>
            <person name="Sims S."/>
            <person name="McLay K."/>
            <person name="Plumb B."/>
            <person name="Davis J."/>
            <person name="Clee C."/>
            <person name="Oliver K."/>
            <person name="Clark R."/>
            <person name="Riddle C."/>
            <person name="Elliot D."/>
            <person name="Threadgold G."/>
            <person name="Harden G."/>
            <person name="Ware D."/>
            <person name="Begum S."/>
            <person name="Mortimore B."/>
            <person name="Kerry G."/>
            <person name="Heath P."/>
            <person name="Phillimore B."/>
            <person name="Tracey A."/>
            <person name="Corby N."/>
            <person name="Dunn M."/>
            <person name="Johnson C."/>
            <person name="Wood J."/>
            <person name="Clark S."/>
            <person name="Pelan S."/>
            <person name="Griffiths G."/>
            <person name="Smith M."/>
            <person name="Glithero R."/>
            <person name="Howden P."/>
            <person name="Barker N."/>
            <person name="Lloyd C."/>
            <person name="Stevens C."/>
            <person name="Harley J."/>
            <person name="Holt K."/>
            <person name="Panagiotidis G."/>
            <person name="Lovell J."/>
            <person name="Beasley H."/>
            <person name="Henderson C."/>
            <person name="Gordon D."/>
            <person name="Auger K."/>
            <person name="Wright D."/>
            <person name="Collins J."/>
            <person name="Raisen C."/>
            <person name="Dyer L."/>
            <person name="Leung K."/>
            <person name="Robertson L."/>
            <person name="Ambridge K."/>
            <person name="Leongamornlert D."/>
            <person name="McGuire S."/>
            <person name="Gilderthorp R."/>
            <person name="Griffiths C."/>
            <person name="Manthravadi D."/>
            <person name="Nichol S."/>
            <person name="Barker G."/>
            <person name="Whitehead S."/>
            <person name="Kay M."/>
            <person name="Brown J."/>
            <person name="Murnane C."/>
            <person name="Gray E."/>
            <person name="Humphries M."/>
            <person name="Sycamore N."/>
            <person name="Barker D."/>
            <person name="Saunders D."/>
            <person name="Wallis J."/>
            <person name="Babbage A."/>
            <person name="Hammond S."/>
            <person name="Mashreghi-Mohammadi M."/>
            <person name="Barr L."/>
            <person name="Martin S."/>
            <person name="Wray P."/>
            <person name="Ellington A."/>
            <person name="Matthews N."/>
            <person name="Ellwood M."/>
            <person name="Woodmansey R."/>
            <person name="Clark G."/>
            <person name="Cooper J."/>
            <person name="Tromans A."/>
            <person name="Grafham D."/>
            <person name="Skuce C."/>
            <person name="Pandian R."/>
            <person name="Andrews R."/>
            <person name="Harrison E."/>
            <person name="Kimberley A."/>
            <person name="Garnett J."/>
            <person name="Fosker N."/>
            <person name="Hall R."/>
            <person name="Garner P."/>
            <person name="Kelly D."/>
            <person name="Bird C."/>
            <person name="Palmer S."/>
            <person name="Gehring I."/>
            <person name="Berger A."/>
            <person name="Dooley C.M."/>
            <person name="Ersan-Urun Z."/>
            <person name="Eser C."/>
            <person name="Geiger H."/>
            <person name="Geisler M."/>
            <person name="Karotki L."/>
            <person name="Kirn A."/>
            <person name="Konantz J."/>
            <person name="Konantz M."/>
            <person name="Oberlander M."/>
            <person name="Rudolph-Geiger S."/>
            <person name="Teucke M."/>
            <person name="Lanz C."/>
            <person name="Raddatz G."/>
            <person name="Osoegawa K."/>
            <person name="Zhu B."/>
            <person name="Rapp A."/>
            <person name="Widaa S."/>
            <person name="Langford C."/>
            <person name="Yang F."/>
            <person name="Schuster S.C."/>
            <person name="Carter N.P."/>
            <person name="Harrow J."/>
            <person name="Ning Z."/>
            <person name="Herrero J."/>
            <person name="Searle S.M."/>
            <person name="Enright A."/>
            <person name="Geisler R."/>
            <person name="Plasterk R.H."/>
            <person name="Lee C."/>
            <person name="Westerfield M."/>
            <person name="de Jong P.J."/>
            <person name="Zon L.I."/>
            <person name="Postlethwait J.H."/>
            <person name="Nusslein-Volhard C."/>
            <person name="Hubbard T.J."/>
            <person name="Roest Crollius H."/>
            <person name="Rogers J."/>
            <person name="Stemple D.L."/>
        </authorList>
    </citation>
    <scope>NUCLEOTIDE SEQUENCE [LARGE SCALE GENOMIC DNA]</scope>
    <source>
        <strain>Tuebingen</strain>
    </source>
</reference>
<reference key="2">
    <citation type="journal article" date="2013" name="Science">
        <title>Developmental control of the melanocortin-4 receptor by MRAP2 proteins in zebrafish.</title>
        <authorList>
            <person name="Sebag J.A."/>
            <person name="Zhang C."/>
            <person name="Hinkle P.M."/>
            <person name="Bradshaw A.M."/>
            <person name="Cone R.D."/>
        </authorList>
    </citation>
    <scope>FUNCTION</scope>
    <scope>INTERACTION WITH MC4R</scope>
    <scope>TISSUE SPECIFICITY</scope>
    <scope>DEVELOPMENTAL STAGE</scope>
</reference>
<sequence length="199" mass="22563">MSEYSNRSQAGADYEWHYEYYEDEEPVSFEGLRANRYSIVIGFWVGLAVFVIFMFFVLTLLTKTGAPHPEMCDASMKPHVLIGCELEVGGSLAFSLPPLPDQSRSLFHFYIHKEERVKTHKDAVIGRGMHCGRGNAERADEDEHFMSSFNIPNFVNSEQSSSLGHDDFLLSEPPIITDGQSDELKTAEPAHLCYDIIRH</sequence>
<dbReference type="EMBL" id="BX649468">
    <property type="status" value="NOT_ANNOTATED_CDS"/>
    <property type="molecule type" value="Genomic_DNA"/>
</dbReference>
<dbReference type="RefSeq" id="XP_005168578.1">
    <property type="nucleotide sequence ID" value="XM_005168521.5"/>
</dbReference>
<dbReference type="SMR" id="P0DM64"/>
<dbReference type="STRING" id="7955.ENSDARP00000132698"/>
<dbReference type="GlyCosmos" id="P0DM64">
    <property type="glycosylation" value="1 site, No reported glycans"/>
</dbReference>
<dbReference type="Ensembl" id="ENSDART00000168266">
    <property type="protein sequence ID" value="ENSDARP00000132698"/>
    <property type="gene ID" value="ENSDARG00000103050"/>
</dbReference>
<dbReference type="GeneID" id="101884805"/>
<dbReference type="KEGG" id="dre:101884805"/>
<dbReference type="AGR" id="ZFIN:ZDB-GENE-100729-5"/>
<dbReference type="CTD" id="101884805"/>
<dbReference type="ZFIN" id="ZDB-GENE-100729-5">
    <property type="gene designation" value="mrap2b"/>
</dbReference>
<dbReference type="HOGENOM" id="CLU_110753_0_0_1"/>
<dbReference type="InParanoid" id="P0DM64"/>
<dbReference type="OMA" id="NGHCDTH"/>
<dbReference type="OrthoDB" id="9904651at2759"/>
<dbReference type="PRO" id="PR:P0DM64"/>
<dbReference type="Proteomes" id="UP000000437">
    <property type="component" value="Chromosome 4"/>
</dbReference>
<dbReference type="Bgee" id="ENSDARG00000103050">
    <property type="expression patterns" value="Expressed in dorsal periventricular hypothalamus and 3 other cell types or tissues"/>
</dbReference>
<dbReference type="GO" id="GO:0005737">
    <property type="term" value="C:cytoplasm"/>
    <property type="evidence" value="ECO:0000314"/>
    <property type="project" value="ZFIN"/>
</dbReference>
<dbReference type="GO" id="GO:0005783">
    <property type="term" value="C:endoplasmic reticulum"/>
    <property type="evidence" value="ECO:0000314"/>
    <property type="project" value="ZFIN"/>
</dbReference>
<dbReference type="GO" id="GO:0005789">
    <property type="term" value="C:endoplasmic reticulum membrane"/>
    <property type="evidence" value="ECO:0007669"/>
    <property type="project" value="UniProtKB-SubCell"/>
</dbReference>
<dbReference type="GO" id="GO:0005794">
    <property type="term" value="C:Golgi apparatus"/>
    <property type="evidence" value="ECO:0000314"/>
    <property type="project" value="ZFIN"/>
</dbReference>
<dbReference type="GO" id="GO:0048471">
    <property type="term" value="C:perinuclear region of cytoplasm"/>
    <property type="evidence" value="ECO:0000314"/>
    <property type="project" value="ZFIN"/>
</dbReference>
<dbReference type="GO" id="GO:0005886">
    <property type="term" value="C:plasma membrane"/>
    <property type="evidence" value="ECO:0000318"/>
    <property type="project" value="GO_Central"/>
</dbReference>
<dbReference type="GO" id="GO:0031780">
    <property type="term" value="F:corticotropin hormone receptor binding"/>
    <property type="evidence" value="ECO:0000318"/>
    <property type="project" value="GO_Central"/>
</dbReference>
<dbReference type="GO" id="GO:0030545">
    <property type="term" value="F:signaling receptor regulator activity"/>
    <property type="evidence" value="ECO:0000315"/>
    <property type="project" value="UniProtKB"/>
</dbReference>
<dbReference type="GO" id="GO:0070996">
    <property type="term" value="F:type 1 melanocortin receptor binding"/>
    <property type="evidence" value="ECO:0000318"/>
    <property type="project" value="GO_Central"/>
</dbReference>
<dbReference type="GO" id="GO:0031781">
    <property type="term" value="F:type 3 melanocortin receptor binding"/>
    <property type="evidence" value="ECO:0000318"/>
    <property type="project" value="GO_Central"/>
</dbReference>
<dbReference type="GO" id="GO:0031782">
    <property type="term" value="F:type 4 melanocortin receptor binding"/>
    <property type="evidence" value="ECO:0000314"/>
    <property type="project" value="UniProtKB"/>
</dbReference>
<dbReference type="GO" id="GO:0031783">
    <property type="term" value="F:type 5 melanocortin receptor binding"/>
    <property type="evidence" value="ECO:0000318"/>
    <property type="project" value="GO_Central"/>
</dbReference>
<dbReference type="GO" id="GO:0097009">
    <property type="term" value="P:energy homeostasis"/>
    <property type="evidence" value="ECO:0000315"/>
    <property type="project" value="UniProtKB"/>
</dbReference>
<dbReference type="GO" id="GO:0006112">
    <property type="term" value="P:energy reserve metabolic process"/>
    <property type="evidence" value="ECO:0000315"/>
    <property type="project" value="UniProtKB"/>
</dbReference>
<dbReference type="GO" id="GO:0106071">
    <property type="term" value="P:positive regulation of adenylate cyclase-activating G protein-coupled receptor signaling pathway"/>
    <property type="evidence" value="ECO:0000315"/>
    <property type="project" value="ZFIN"/>
</dbReference>
<dbReference type="GO" id="GO:0072659">
    <property type="term" value="P:protein localization to plasma membrane"/>
    <property type="evidence" value="ECO:0000318"/>
    <property type="project" value="GO_Central"/>
</dbReference>
<dbReference type="GO" id="GO:0106070">
    <property type="term" value="P:regulation of adenylate cyclase-activating G protein-coupled receptor signaling pathway"/>
    <property type="evidence" value="ECO:0000318"/>
    <property type="project" value="GO_Central"/>
</dbReference>
<dbReference type="GO" id="GO:0042594">
    <property type="term" value="P:response to starvation"/>
    <property type="evidence" value="ECO:0000314"/>
    <property type="project" value="ZFIN"/>
</dbReference>
<dbReference type="InterPro" id="IPR028111">
    <property type="entry name" value="MRAP"/>
</dbReference>
<dbReference type="PANTHER" id="PTHR28675">
    <property type="entry name" value="MELANOCORTIN-2 RECEPTOR ACCESSORY PROTEIN 2"/>
    <property type="match status" value="1"/>
</dbReference>
<dbReference type="PANTHER" id="PTHR28675:SF1">
    <property type="entry name" value="MELANOCORTIN-2 RECEPTOR ACCESSORY PROTEIN 2"/>
    <property type="match status" value="1"/>
</dbReference>
<dbReference type="Pfam" id="PF15183">
    <property type="entry name" value="MRAP"/>
    <property type="match status" value="1"/>
</dbReference>
<accession>P0DM64</accession>
<comment type="function">
    <text evidence="3">Activator of melanocortin receptor 4 (mc4r), a receptor involved in energy homeostasis. Plays a role after larval development in the control of energy homeostasis and body weight regulation by increasing ligand-sensitivity of mc4r and mc4r-mediated generation of cAMP once the zebrafish begins feeding, increasing the capacity for regulated feeding and growth.</text>
</comment>
<comment type="subunit">
    <text evidence="3">Interacts with mc4r.</text>
</comment>
<comment type="subcellular location">
    <subcellularLocation>
        <location evidence="1">Cell membrane</location>
        <topology evidence="1">Single-pass membrane protein</topology>
    </subcellularLocation>
    <subcellularLocation>
        <location evidence="1">Endoplasmic reticulum membrane</location>
        <topology evidence="1">Single-pass membrane protein</topology>
    </subcellularLocation>
</comment>
<comment type="tissue specificity">
    <text evidence="3">Expressed in adult brain.</text>
</comment>
<comment type="developmental stage">
    <text evidence="3">Not expressed in embryos. Mainly expressed in adult.</text>
</comment>
<comment type="miscellaneous">
    <text evidence="5">Two paralogs of MRAP2 are present in zebrafish: mrap2a, which plays a role during larval development and mrap2b, which constitutes the ortholog of mammalian MRAP2.</text>
</comment>
<comment type="similarity">
    <text evidence="4">Belongs to the MRAP family.</text>
</comment>
<name>MRP2B_DANRE</name>
<evidence type="ECO:0000250" key="1"/>
<evidence type="ECO:0000255" key="2"/>
<evidence type="ECO:0000269" key="3">
    <source>
    </source>
</evidence>
<evidence type="ECO:0000305" key="4"/>
<evidence type="ECO:0000305" key="5">
    <source>
    </source>
</evidence>